<geneLocation type="chloroplast"/>
<accession>Q09G26</accession>
<reference key="1">
    <citation type="journal article" date="2006" name="BMC Plant Biol.">
        <title>Rapid and accurate pyrosequencing of angiosperm plastid genomes.</title>
        <authorList>
            <person name="Moore M.J."/>
            <person name="Dhingra A."/>
            <person name="Soltis P.S."/>
            <person name="Shaw R."/>
            <person name="Farmerie W.G."/>
            <person name="Folta K.M."/>
            <person name="Soltis D.E."/>
        </authorList>
    </citation>
    <scope>NUCLEOTIDE SEQUENCE [LARGE SCALE GENOMIC DNA]</scope>
</reference>
<name>PSAJ_PLAOC</name>
<dbReference type="EMBL" id="DQ923116">
    <property type="protein sequence ID" value="ABI49798.1"/>
    <property type="molecule type" value="Genomic_DNA"/>
</dbReference>
<dbReference type="RefSeq" id="YP_740585.1">
    <property type="nucleotide sequence ID" value="NC_008335.1"/>
</dbReference>
<dbReference type="SMR" id="Q09G26"/>
<dbReference type="GeneID" id="4271247"/>
<dbReference type="GO" id="GO:0009535">
    <property type="term" value="C:chloroplast thylakoid membrane"/>
    <property type="evidence" value="ECO:0007669"/>
    <property type="project" value="UniProtKB-SubCell"/>
</dbReference>
<dbReference type="GO" id="GO:0009522">
    <property type="term" value="C:photosystem I"/>
    <property type="evidence" value="ECO:0007669"/>
    <property type="project" value="UniProtKB-KW"/>
</dbReference>
<dbReference type="GO" id="GO:0015979">
    <property type="term" value="P:photosynthesis"/>
    <property type="evidence" value="ECO:0007669"/>
    <property type="project" value="UniProtKB-UniRule"/>
</dbReference>
<dbReference type="FunFam" id="1.20.5.510:FF:000001">
    <property type="entry name" value="Photosystem I reaction center subunit IX"/>
    <property type="match status" value="1"/>
</dbReference>
<dbReference type="Gene3D" id="1.20.5.510">
    <property type="entry name" value="Single helix bin"/>
    <property type="match status" value="1"/>
</dbReference>
<dbReference type="HAMAP" id="MF_00522">
    <property type="entry name" value="PSI_PsaJ"/>
    <property type="match status" value="1"/>
</dbReference>
<dbReference type="InterPro" id="IPR002615">
    <property type="entry name" value="PSI_PsaJ"/>
</dbReference>
<dbReference type="InterPro" id="IPR036062">
    <property type="entry name" value="PSI_PsaJ_sf"/>
</dbReference>
<dbReference type="PANTHER" id="PTHR36082">
    <property type="match status" value="1"/>
</dbReference>
<dbReference type="PANTHER" id="PTHR36082:SF2">
    <property type="entry name" value="PHOTOSYSTEM I REACTION CENTER SUBUNIT IX"/>
    <property type="match status" value="1"/>
</dbReference>
<dbReference type="Pfam" id="PF01701">
    <property type="entry name" value="PSI_PsaJ"/>
    <property type="match status" value="1"/>
</dbReference>
<dbReference type="SUPFAM" id="SSF81544">
    <property type="entry name" value="Subunit IX of photosystem I reaction centre, PsaJ"/>
    <property type="match status" value="1"/>
</dbReference>
<evidence type="ECO:0000255" key="1">
    <source>
        <dbReference type="HAMAP-Rule" id="MF_00522"/>
    </source>
</evidence>
<keyword id="KW-0150">Chloroplast</keyword>
<keyword id="KW-0472">Membrane</keyword>
<keyword id="KW-0602">Photosynthesis</keyword>
<keyword id="KW-0603">Photosystem I</keyword>
<keyword id="KW-0934">Plastid</keyword>
<keyword id="KW-0793">Thylakoid</keyword>
<keyword id="KW-0812">Transmembrane</keyword>
<keyword id="KW-1133">Transmembrane helix</keyword>
<sequence>MRDIKTYLSVAPVLSTLWFGALAGLLIEINRFFPDALTFPFF</sequence>
<comment type="function">
    <text evidence="1">May help in the organization of the PsaE and PsaF subunits.</text>
</comment>
<comment type="subcellular location">
    <subcellularLocation>
        <location evidence="1">Plastid</location>
        <location evidence="1">Chloroplast thylakoid membrane</location>
        <topology evidence="1">Single-pass membrane protein</topology>
    </subcellularLocation>
</comment>
<comment type="similarity">
    <text evidence="1">Belongs to the PsaJ family.</text>
</comment>
<gene>
    <name evidence="1" type="primary">psaJ</name>
</gene>
<proteinExistence type="inferred from homology"/>
<feature type="chain" id="PRO_0000354168" description="Photosystem I reaction center subunit IX">
    <location>
        <begin position="1"/>
        <end position="42"/>
    </location>
</feature>
<feature type="transmembrane region" description="Helical" evidence="1">
    <location>
        <begin position="7"/>
        <end position="27"/>
    </location>
</feature>
<organism>
    <name type="scientific">Platanus occidentalis</name>
    <name type="common">Sycamore</name>
    <name type="synonym">American plane tree</name>
    <dbReference type="NCBI Taxonomy" id="4403"/>
    <lineage>
        <taxon>Eukaryota</taxon>
        <taxon>Viridiplantae</taxon>
        <taxon>Streptophyta</taxon>
        <taxon>Embryophyta</taxon>
        <taxon>Tracheophyta</taxon>
        <taxon>Spermatophyta</taxon>
        <taxon>Magnoliopsida</taxon>
        <taxon>Proteales</taxon>
        <taxon>Platanaceae</taxon>
        <taxon>Platanus</taxon>
    </lineage>
</organism>
<protein>
    <recommendedName>
        <fullName evidence="1">Photosystem I reaction center subunit IX</fullName>
    </recommendedName>
    <alternativeName>
        <fullName evidence="1">PSI-J</fullName>
    </alternativeName>
</protein>